<reference key="1">
    <citation type="journal article" date="1999" name="Genomics">
        <title>The third member of the transforming acidic coiled coil-containing gene family, TACC3, maps in 4p16, close to translocation breakpoints in multiple myeloma, and is upregulated in various cancer cell lines.</title>
        <authorList>
            <person name="Still I.H."/>
            <person name="Vince P."/>
            <person name="Cowell J.K."/>
        </authorList>
    </citation>
    <scope>NUCLEOTIDE SEQUENCE [MRNA]</scope>
</reference>
<reference key="2">
    <citation type="journal article" date="2001" name="Br. J. Haematol.">
        <title>Characterization and localization of expression of an erythropoietin-induced gene, ERIC-1/TACC3, identified in erythroid precursor cells.</title>
        <authorList>
            <person name="McKeveney P.J."/>
            <person name="Hodges V.M."/>
            <person name="Mullan R.N."/>
            <person name="Maxwell P."/>
            <person name="Simpson D."/>
            <person name="Thompson A."/>
            <person name="Winter P.C."/>
            <person name="Lappin T.R."/>
            <person name="Maxwell A.P."/>
        </authorList>
    </citation>
    <scope>NUCLEOTIDE SEQUENCE [MRNA]</scope>
    <scope>VARIANTS TYR-275; SER-287 AND GLU-514</scope>
</reference>
<reference key="3">
    <citation type="journal article" date="2004" name="Genome Res.">
        <title>The status, quality, and expansion of the NIH full-length cDNA project: the Mammalian Gene Collection (MGC).</title>
        <authorList>
            <consortium name="The MGC Project Team"/>
        </authorList>
    </citation>
    <scope>NUCLEOTIDE SEQUENCE [LARGE SCALE MRNA]</scope>
    <scope>VARIANTS TYR-275; SER-287 AND GLU-514</scope>
    <source>
        <tissue>Skin</tissue>
    </source>
</reference>
<reference key="4">
    <citation type="journal article" date="2004" name="Oncogene">
        <title>The transforming acidic coiled coil proteins interact with nuclear histone acetyltransferases.</title>
        <authorList>
            <person name="Gangisetty O."/>
            <person name="Lauffart B."/>
            <person name="Sondarva G.V."/>
            <person name="Chelsea D.M."/>
            <person name="Still I.H."/>
        </authorList>
    </citation>
    <scope>INTERACTION WITH GCN5L2 AND PCAF</scope>
    <scope>SUBCELLULAR LOCATION</scope>
    <scope>FUNCTION</scope>
</reference>
<reference key="5">
    <citation type="journal article" date="2006" name="Nat. Biotechnol.">
        <title>A probability-based approach for high-throughput protein phosphorylation analysis and site localization.</title>
        <authorList>
            <person name="Beausoleil S.A."/>
            <person name="Villen J."/>
            <person name="Gerber S.A."/>
            <person name="Rush J."/>
            <person name="Gygi S.P."/>
        </authorList>
    </citation>
    <scope>PHOSPHORYLATION [LARGE SCALE ANALYSIS] AT SER-25 AND SER-434</scope>
    <scope>IDENTIFICATION BY MASS SPECTROMETRY [LARGE SCALE ANALYSIS]</scope>
    <source>
        <tissue>Cervix carcinoma</tissue>
    </source>
</reference>
<reference key="6">
    <citation type="journal article" date="2007" name="Cancer Res.">
        <title>Localization of human TACC3 to mitotic spindles is mediated by phosphorylation on Ser558 by Aurora A: a novel pharmacodynamic method for measuring Aurora A activity.</title>
        <authorList>
            <person name="LeRoy P.J."/>
            <person name="Hunter J.J."/>
            <person name="Hoar K.M."/>
            <person name="Burke K.E."/>
            <person name="Shinde V."/>
            <person name="Ruan J."/>
            <person name="Bowman D."/>
            <person name="Galvin K."/>
            <person name="Ecsedy J.A."/>
        </authorList>
    </citation>
    <scope>PHOSPHORYLATION AT SER-558</scope>
    <scope>SUBCELLULAR LOCATION</scope>
</reference>
<reference key="7">
    <citation type="journal article" date="2008" name="J. Proteome Res.">
        <title>Combining protein-based IMAC, peptide-based IMAC, and MudPIT for efficient phosphoproteomic analysis.</title>
        <authorList>
            <person name="Cantin G.T."/>
            <person name="Yi W."/>
            <person name="Lu B."/>
            <person name="Park S.K."/>
            <person name="Xu T."/>
            <person name="Lee J.-D."/>
            <person name="Yates J.R. III"/>
        </authorList>
    </citation>
    <scope>PHOSPHORYLATION [LARGE SCALE ANALYSIS] AT SER-25</scope>
    <scope>IDENTIFICATION BY MASS SPECTROMETRY [LARGE SCALE ANALYSIS]</scope>
    <source>
        <tissue>Cervix carcinoma</tissue>
    </source>
</reference>
<reference key="8">
    <citation type="journal article" date="2008" name="Proc. Natl. Acad. Sci. U.S.A.">
        <title>A quantitative atlas of mitotic phosphorylation.</title>
        <authorList>
            <person name="Dephoure N."/>
            <person name="Zhou C."/>
            <person name="Villen J."/>
            <person name="Beausoleil S.A."/>
            <person name="Bakalarski C.E."/>
            <person name="Elledge S.J."/>
            <person name="Gygi S.P."/>
        </authorList>
    </citation>
    <scope>PHOSPHORYLATION [LARGE SCALE ANALYSIS] AT SER-25; SER-71; SER-317; SER-434 AND SER-558</scope>
    <scope>IDENTIFICATION BY MASS SPECTROMETRY [LARGE SCALE ANALYSIS]</scope>
    <source>
        <tissue>Cervix carcinoma</tissue>
    </source>
</reference>
<reference key="9">
    <citation type="journal article" date="2009" name="Anal. Chem.">
        <title>Lys-N and trypsin cover complementary parts of the phosphoproteome in a refined SCX-based approach.</title>
        <authorList>
            <person name="Gauci S."/>
            <person name="Helbig A.O."/>
            <person name="Slijper M."/>
            <person name="Krijgsveld J."/>
            <person name="Heck A.J."/>
            <person name="Mohammed S."/>
        </authorList>
    </citation>
    <scope>ACETYLATION [LARGE SCALE ANALYSIS] AT SER-2</scope>
    <scope>CLEAVAGE OF INITIATOR METHIONINE [LARGE SCALE ANALYSIS]</scope>
    <scope>IDENTIFICATION BY MASS SPECTROMETRY [LARGE SCALE ANALYSIS]</scope>
</reference>
<reference key="10">
    <citation type="journal article" date="2009" name="Sci. Signal.">
        <title>Quantitative phosphoproteomic analysis of T cell receptor signaling reveals system-wide modulation of protein-protein interactions.</title>
        <authorList>
            <person name="Mayya V."/>
            <person name="Lundgren D.H."/>
            <person name="Hwang S.-I."/>
            <person name="Rezaul K."/>
            <person name="Wu L."/>
            <person name="Eng J.K."/>
            <person name="Rodionov V."/>
            <person name="Han D.K."/>
        </authorList>
    </citation>
    <scope>PHOSPHORYLATION [LARGE SCALE ANALYSIS] AT SER-175</scope>
    <scope>IDENTIFICATION BY MASS SPECTROMETRY [LARGE SCALE ANALYSIS]</scope>
    <source>
        <tissue>Leukemic T-cell</tissue>
    </source>
</reference>
<reference key="11">
    <citation type="journal article" date="2010" name="Sci. Signal.">
        <title>Quantitative phosphoproteomics reveals widespread full phosphorylation site occupancy during mitosis.</title>
        <authorList>
            <person name="Olsen J.V."/>
            <person name="Vermeulen M."/>
            <person name="Santamaria A."/>
            <person name="Kumar C."/>
            <person name="Miller M.L."/>
            <person name="Jensen L.J."/>
            <person name="Gnad F."/>
            <person name="Cox J."/>
            <person name="Jensen T.S."/>
            <person name="Nigg E.A."/>
            <person name="Brunak S."/>
            <person name="Mann M."/>
        </authorList>
    </citation>
    <scope>PHOSPHORYLATION [LARGE SCALE ANALYSIS] AT SER-25; SER-71; SER-317 AND SER-402</scope>
    <scope>IDENTIFICATION BY MASS SPECTROMETRY [LARGE SCALE ANALYSIS]</scope>
    <source>
        <tissue>Cervix carcinoma</tissue>
    </source>
</reference>
<reference key="12">
    <citation type="journal article" date="2011" name="BMC Syst. Biol.">
        <title>Initial characterization of the human central proteome.</title>
        <authorList>
            <person name="Burkard T.R."/>
            <person name="Planyavsky M."/>
            <person name="Kaupe I."/>
            <person name="Breitwieser F.P."/>
            <person name="Buerckstuemmer T."/>
            <person name="Bennett K.L."/>
            <person name="Superti-Furga G."/>
            <person name="Colinge J."/>
        </authorList>
    </citation>
    <scope>IDENTIFICATION BY MASS SPECTROMETRY [LARGE SCALE ANALYSIS]</scope>
</reference>
<reference key="13">
    <citation type="journal article" date="2011" name="EMBO J.">
        <title>A TACC3/ch-TOG/clathrin complex stabilises kinetochore fibres by inter-microtubule bridging.</title>
        <authorList>
            <person name="Booth D.G."/>
            <person name="Hood F.E."/>
            <person name="Prior I.A."/>
            <person name="Royle S.J."/>
        </authorList>
    </citation>
    <scope>INTERACTION WITH CKAP5D AND CLATHRIN</scope>
    <scope>FUNCTION</scope>
    <scope>SUBCELLULAR LOCATION</scope>
    <scope>MUTAGENESIS OF SER-558</scope>
</reference>
<reference key="14">
    <citation type="journal article" date="2011" name="Sci. Signal.">
        <title>System-wide temporal characterization of the proteome and phosphoproteome of human embryonic stem cell differentiation.</title>
        <authorList>
            <person name="Rigbolt K.T."/>
            <person name="Prokhorova T.A."/>
            <person name="Akimov V."/>
            <person name="Henningsen J."/>
            <person name="Johansen P.T."/>
            <person name="Kratchmarova I."/>
            <person name="Kassem M."/>
            <person name="Mann M."/>
            <person name="Olsen J.V."/>
            <person name="Blagoev B."/>
        </authorList>
    </citation>
    <scope>PHOSPHORYLATION [LARGE SCALE ANALYSIS] AT SER-39</scope>
    <scope>IDENTIFICATION BY MASS SPECTROMETRY [LARGE SCALE ANALYSIS]</scope>
</reference>
<reference key="15">
    <citation type="journal article" date="2013" name="J. Cell Biol.">
        <title>Coordination of adjacent domains mediates TACC3-ch-TOG-clathrin assembly and mitotic spindle binding.</title>
        <authorList>
            <person name="Hood F.E."/>
            <person name="Williams S.J."/>
            <person name="Burgess S.G."/>
            <person name="Richards M.W."/>
            <person name="Roth D."/>
            <person name="Straube A."/>
            <person name="Pfuhl M."/>
            <person name="Bayliss R."/>
            <person name="Royle S.J."/>
        </authorList>
    </citation>
    <scope>INTERACTION WITH CLATHRIN AND CKAP5</scope>
    <scope>SUBCELLULAR LOCATION</scope>
    <scope>MUTAGENESIS OF 566-LEU-LEU-567</scope>
    <scope>FUNCTION</scope>
</reference>
<reference key="16">
    <citation type="journal article" date="2013" name="J. Cell Sci.">
        <title>Specific removal of TACC3-ch-TOG-clathrin at metaphase deregulates kinetochore fiber tension.</title>
        <authorList>
            <person name="Cheeseman L.P."/>
            <person name="Harry E.F."/>
            <person name="McAinsh A.D."/>
            <person name="Prior I.A."/>
            <person name="Royle S.J."/>
        </authorList>
    </citation>
    <scope>FUNCTION OF THE TACC3/CH-TOG/CLATHRIN COMPLEX</scope>
</reference>
<reference key="17">
    <citation type="journal article" date="2013" name="J. Proteome Res.">
        <title>Toward a comprehensive characterization of a human cancer cell phosphoproteome.</title>
        <authorList>
            <person name="Zhou H."/>
            <person name="Di Palma S."/>
            <person name="Preisinger C."/>
            <person name="Peng M."/>
            <person name="Polat A.N."/>
            <person name="Heck A.J."/>
            <person name="Mohammed S."/>
        </authorList>
    </citation>
    <scope>PHOSPHORYLATION [LARGE SCALE ANALYSIS] AT SER-25; SER-39; SER-71; SER-177; SER-250; SER-317; SER-434 AND SER-558</scope>
    <scope>IDENTIFICATION BY MASS SPECTROMETRY [LARGE SCALE ANALYSIS]</scope>
    <source>
        <tissue>Cervix carcinoma</tissue>
        <tissue>Erythroleukemia</tissue>
    </source>
</reference>
<reference key="18">
    <citation type="journal article" date="2015" name="Biol. Open">
        <title>TACC3-ch-TOG track the growing tips of microtubules independently of clathrin and Aurora-A phosphorylation.</title>
        <authorList>
            <person name="Gutierrez-Caballero C."/>
            <person name="Burgess S.G."/>
            <person name="Bayliss R."/>
            <person name="Royle S.J."/>
        </authorList>
    </citation>
    <scope>INTERACTION WITH CKAP5</scope>
    <scope>SUBCELLULAR LOCATION</scope>
</reference>
<keyword id="KW-0002">3D-structure</keyword>
<keyword id="KW-0007">Acetylation</keyword>
<keyword id="KW-0131">Cell cycle</keyword>
<keyword id="KW-0132">Cell division</keyword>
<keyword id="KW-0175">Coiled coil</keyword>
<keyword id="KW-0963">Cytoplasm</keyword>
<keyword id="KW-0206">Cytoskeleton</keyword>
<keyword id="KW-0498">Mitosis</keyword>
<keyword id="KW-0597">Phosphoprotein</keyword>
<keyword id="KW-1267">Proteomics identification</keyword>
<keyword id="KW-1185">Reference proteome</keyword>
<dbReference type="EMBL" id="AF093543">
    <property type="protein sequence ID" value="AAD25964.1"/>
    <property type="molecule type" value="mRNA"/>
</dbReference>
<dbReference type="EMBL" id="AJ243997">
    <property type="protein sequence ID" value="CAB53009.1"/>
    <property type="molecule type" value="mRNA"/>
</dbReference>
<dbReference type="EMBL" id="BC106071">
    <property type="protein sequence ID" value="AAI06072.1"/>
    <property type="molecule type" value="mRNA"/>
</dbReference>
<dbReference type="EMBL" id="BC111771">
    <property type="protein sequence ID" value="AAI11772.1"/>
    <property type="molecule type" value="mRNA"/>
</dbReference>
<dbReference type="CCDS" id="CCDS3352.1"/>
<dbReference type="RefSeq" id="NP_006333.1">
    <property type="nucleotide sequence ID" value="NM_006342.3"/>
</dbReference>
<dbReference type="RefSeq" id="XP_016863142.1">
    <property type="nucleotide sequence ID" value="XM_017007653.2"/>
</dbReference>
<dbReference type="RefSeq" id="XP_054204740.1">
    <property type="nucleotide sequence ID" value="XM_054348765.1"/>
</dbReference>
<dbReference type="RefSeq" id="XP_054204741.1">
    <property type="nucleotide sequence ID" value="XM_054348766.1"/>
</dbReference>
<dbReference type="RefSeq" id="XP_054204742.1">
    <property type="nucleotide sequence ID" value="XM_054348767.1"/>
</dbReference>
<dbReference type="PDB" id="5LXN">
    <property type="method" value="X-ray"/>
    <property type="resolution" value="2.08 A"/>
    <property type="chains" value="A/B/C/D/E/F/G/H=758-838"/>
</dbReference>
<dbReference type="PDB" id="5LXO">
    <property type="method" value="X-ray"/>
    <property type="resolution" value="2.18 A"/>
    <property type="chains" value="A/B/C/D/E/F/G/H=758-838"/>
</dbReference>
<dbReference type="PDB" id="5ODS">
    <property type="method" value="X-ray"/>
    <property type="resolution" value="3.09 A"/>
    <property type="chains" value="E/F/G/H=550-567"/>
</dbReference>
<dbReference type="PDB" id="5ODT">
    <property type="method" value="X-ray"/>
    <property type="resolution" value="2.02 A"/>
    <property type="chains" value="B=518-563"/>
</dbReference>
<dbReference type="PDBsum" id="5LXN"/>
<dbReference type="PDBsum" id="5LXO"/>
<dbReference type="PDBsum" id="5ODS"/>
<dbReference type="PDBsum" id="5ODT"/>
<dbReference type="SMR" id="Q9Y6A5"/>
<dbReference type="BioGRID" id="115723">
    <property type="interactions" value="155"/>
</dbReference>
<dbReference type="CORUM" id="Q9Y6A5"/>
<dbReference type="FunCoup" id="Q9Y6A5">
    <property type="interactions" value="1134"/>
</dbReference>
<dbReference type="IntAct" id="Q9Y6A5">
    <property type="interactions" value="98"/>
</dbReference>
<dbReference type="MINT" id="Q9Y6A5"/>
<dbReference type="STRING" id="9606.ENSP00000326550"/>
<dbReference type="ChEMBL" id="CHEMBL5291560"/>
<dbReference type="GlyGen" id="Q9Y6A5">
    <property type="glycosylation" value="3 sites, 1 O-linked glycan (2 sites)"/>
</dbReference>
<dbReference type="iPTMnet" id="Q9Y6A5"/>
<dbReference type="MetOSite" id="Q9Y6A5"/>
<dbReference type="PhosphoSitePlus" id="Q9Y6A5"/>
<dbReference type="BioMuta" id="TACC3"/>
<dbReference type="DMDM" id="13431939"/>
<dbReference type="jPOST" id="Q9Y6A5"/>
<dbReference type="MassIVE" id="Q9Y6A5"/>
<dbReference type="PaxDb" id="9606-ENSP00000326550"/>
<dbReference type="PeptideAtlas" id="Q9Y6A5"/>
<dbReference type="ProteomicsDB" id="86642"/>
<dbReference type="Pumba" id="Q9Y6A5"/>
<dbReference type="Antibodypedia" id="8499">
    <property type="antibodies" value="431 antibodies from 37 providers"/>
</dbReference>
<dbReference type="DNASU" id="10460"/>
<dbReference type="Ensembl" id="ENST00000313288.9">
    <property type="protein sequence ID" value="ENSP00000326550.4"/>
    <property type="gene ID" value="ENSG00000013810.21"/>
</dbReference>
<dbReference type="Ensembl" id="ENST00000651472.1">
    <property type="protein sequence ID" value="ENSP00000498361.1"/>
    <property type="gene ID" value="ENSG00000013810.21"/>
</dbReference>
<dbReference type="GeneID" id="10460"/>
<dbReference type="KEGG" id="hsa:10460"/>
<dbReference type="MANE-Select" id="ENST00000313288.9">
    <property type="protein sequence ID" value="ENSP00000326550.4"/>
    <property type="RefSeq nucleotide sequence ID" value="NM_006342.3"/>
    <property type="RefSeq protein sequence ID" value="NP_006333.1"/>
</dbReference>
<dbReference type="UCSC" id="uc003gdo.4">
    <property type="organism name" value="human"/>
</dbReference>
<dbReference type="AGR" id="HGNC:11524"/>
<dbReference type="CTD" id="10460"/>
<dbReference type="DisGeNET" id="10460"/>
<dbReference type="GeneCards" id="TACC3"/>
<dbReference type="HGNC" id="HGNC:11524">
    <property type="gene designation" value="TACC3"/>
</dbReference>
<dbReference type="HPA" id="ENSG00000013810">
    <property type="expression patterns" value="Tissue enhanced (bone marrow, lymphoid tissue, testis)"/>
</dbReference>
<dbReference type="MalaCards" id="TACC3"/>
<dbReference type="MIM" id="605303">
    <property type="type" value="gene"/>
</dbReference>
<dbReference type="neXtProt" id="NX_Q9Y6A5"/>
<dbReference type="OpenTargets" id="ENSG00000013810"/>
<dbReference type="Orphanet" id="251579">
    <property type="disease" value="Giant cell glioblastoma"/>
</dbReference>
<dbReference type="Orphanet" id="251576">
    <property type="disease" value="Gliosarcoma"/>
</dbReference>
<dbReference type="PharmGKB" id="PA36301"/>
<dbReference type="VEuPathDB" id="HostDB:ENSG00000013810"/>
<dbReference type="eggNOG" id="ENOG502QQ1G">
    <property type="taxonomic scope" value="Eukaryota"/>
</dbReference>
<dbReference type="GeneTree" id="ENSGT00940000158858"/>
<dbReference type="HOGENOM" id="CLU_013959_0_0_1"/>
<dbReference type="InParanoid" id="Q9Y6A5"/>
<dbReference type="OMA" id="HRAEEEC"/>
<dbReference type="OrthoDB" id="10255048at2759"/>
<dbReference type="PAN-GO" id="Q9Y6A5">
    <property type="GO annotations" value="4 GO annotations based on evolutionary models"/>
</dbReference>
<dbReference type="PhylomeDB" id="Q9Y6A5"/>
<dbReference type="TreeFam" id="TF333149"/>
<dbReference type="PathwayCommons" id="Q9Y6A5"/>
<dbReference type="Reactome" id="R-HSA-9013507">
    <property type="pathway name" value="NOTCH3 Activation and Transmission of Signal to the Nucleus"/>
</dbReference>
<dbReference type="Reactome" id="R-HSA-9604323">
    <property type="pathway name" value="Negative regulation of NOTCH4 signaling"/>
</dbReference>
<dbReference type="SignaLink" id="Q9Y6A5"/>
<dbReference type="SIGNOR" id="Q9Y6A5"/>
<dbReference type="BioGRID-ORCS" id="10460">
    <property type="hits" value="408 hits in 1171 CRISPR screens"/>
</dbReference>
<dbReference type="ChiTaRS" id="TACC3">
    <property type="organism name" value="human"/>
</dbReference>
<dbReference type="GeneWiki" id="TACC3"/>
<dbReference type="GenomeRNAi" id="10460"/>
<dbReference type="Pharos" id="Q9Y6A5">
    <property type="development level" value="Tbio"/>
</dbReference>
<dbReference type="PRO" id="PR:Q9Y6A5"/>
<dbReference type="Proteomes" id="UP000005640">
    <property type="component" value="Chromosome 4"/>
</dbReference>
<dbReference type="RNAct" id="Q9Y6A5">
    <property type="molecule type" value="protein"/>
</dbReference>
<dbReference type="Bgee" id="ENSG00000013810">
    <property type="expression patterns" value="Expressed in oocyte and 119 other cell types or tissues"/>
</dbReference>
<dbReference type="ExpressionAtlas" id="Q9Y6A5">
    <property type="expression patterns" value="baseline and differential"/>
</dbReference>
<dbReference type="GO" id="GO:0034451">
    <property type="term" value="C:centriolar satellite"/>
    <property type="evidence" value="ECO:0000314"/>
    <property type="project" value="HPA"/>
</dbReference>
<dbReference type="GO" id="GO:0036064">
    <property type="term" value="C:ciliary basal body"/>
    <property type="evidence" value="ECO:0000314"/>
    <property type="project" value="HPA"/>
</dbReference>
<dbReference type="GO" id="GO:0005737">
    <property type="term" value="C:cytoplasm"/>
    <property type="evidence" value="ECO:0000318"/>
    <property type="project" value="GO_Central"/>
</dbReference>
<dbReference type="GO" id="GO:0005829">
    <property type="term" value="C:cytosol"/>
    <property type="evidence" value="ECO:0000314"/>
    <property type="project" value="HPA"/>
</dbReference>
<dbReference type="GO" id="GO:0005794">
    <property type="term" value="C:Golgi apparatus"/>
    <property type="evidence" value="ECO:0000314"/>
    <property type="project" value="HPA"/>
</dbReference>
<dbReference type="GO" id="GO:0043231">
    <property type="term" value="C:intracellular membrane-bounded organelle"/>
    <property type="evidence" value="ECO:0000314"/>
    <property type="project" value="HPA"/>
</dbReference>
<dbReference type="GO" id="GO:0072686">
    <property type="term" value="C:mitotic spindle"/>
    <property type="evidence" value="ECO:0000314"/>
    <property type="project" value="HPA"/>
</dbReference>
<dbReference type="GO" id="GO:0000922">
    <property type="term" value="C:spindle pole"/>
    <property type="evidence" value="ECO:0007669"/>
    <property type="project" value="UniProtKB-SubCell"/>
</dbReference>
<dbReference type="GO" id="GO:0051301">
    <property type="term" value="P:cell division"/>
    <property type="evidence" value="ECO:0007669"/>
    <property type="project" value="UniProtKB-KW"/>
</dbReference>
<dbReference type="GO" id="GO:0021987">
    <property type="term" value="P:cerebral cortex development"/>
    <property type="evidence" value="ECO:0000318"/>
    <property type="project" value="GO_Central"/>
</dbReference>
<dbReference type="GO" id="GO:0007091">
    <property type="term" value="P:metaphase/anaphase transition of mitotic cell cycle"/>
    <property type="evidence" value="ECO:0000315"/>
    <property type="project" value="UniProtKB"/>
</dbReference>
<dbReference type="GO" id="GO:0000226">
    <property type="term" value="P:microtubule cytoskeleton organization"/>
    <property type="evidence" value="ECO:0000318"/>
    <property type="project" value="GO_Central"/>
</dbReference>
<dbReference type="GO" id="GO:1902850">
    <property type="term" value="P:microtubule cytoskeleton organization involved in mitosis"/>
    <property type="evidence" value="ECO:0000315"/>
    <property type="project" value="UniProtKB"/>
</dbReference>
<dbReference type="GO" id="GO:0007052">
    <property type="term" value="P:mitotic spindle organization"/>
    <property type="evidence" value="ECO:0007669"/>
    <property type="project" value="InterPro"/>
</dbReference>
<dbReference type="GO" id="GO:0007097">
    <property type="term" value="P:nuclear migration"/>
    <property type="evidence" value="ECO:0000318"/>
    <property type="project" value="GO_Central"/>
</dbReference>
<dbReference type="GO" id="GO:0060236">
    <property type="term" value="P:regulation of mitotic spindle organization"/>
    <property type="evidence" value="ECO:0000315"/>
    <property type="project" value="UniProtKB"/>
</dbReference>
<dbReference type="FunFam" id="1.20.5.1700:FF:000001">
    <property type="entry name" value="Transforming acidic coiled-coil-containing protein 1 isoform 2"/>
    <property type="match status" value="1"/>
</dbReference>
<dbReference type="Gene3D" id="1.20.5.1700">
    <property type="match status" value="1"/>
</dbReference>
<dbReference type="InterPro" id="IPR039915">
    <property type="entry name" value="TACC"/>
</dbReference>
<dbReference type="InterPro" id="IPR007707">
    <property type="entry name" value="TACC_C"/>
</dbReference>
<dbReference type="PANTHER" id="PTHR13924">
    <property type="entry name" value="TRANSFORMING ACIDIC COILED-COIL CONTAINING PROTEIN 1/2"/>
    <property type="match status" value="1"/>
</dbReference>
<dbReference type="PANTHER" id="PTHR13924:SF4">
    <property type="entry name" value="TRANSFORMING ACIDIC COILED-COIL-CONTAINING PROTEIN 3"/>
    <property type="match status" value="1"/>
</dbReference>
<dbReference type="Pfam" id="PF05010">
    <property type="entry name" value="TACC_C"/>
    <property type="match status" value="1"/>
</dbReference>
<sequence length="838" mass="90360">MSLQVLNDKNVSNEKNTENCDFLFSPPEVTGRSSVLRVSQKENVPPKNLAKAMKVTFQTPLRDPQTHRILSPSMASKLEAPFTQDDTLGLENSHPVWTQKENQQLIKEVDAKTTHGILQKPVEADTDLLGDASPAFGSGSSSESGPGALADLDCSSSSQSPGSSENQMVSPGKVSGSPEQAVEENLSSYSLDRRVTPASETLEDPCRTESQHKAETPHGAEEECKAETPHGAEEECRHGGVCAPAAVATSPPGAIPKEACGGAPLQGLPGEALGCPAGVGTPVPADGTQTLTCAHTSAPESTAPTNHLVAGRAMTLSPQEEVAAGQMASSSRSGPVKLEFDVSDGATSKRAPPPRRLGERSGLKPPLRKAAVRQQKAPQEVEEDDGRSGAGEDPPMPASRGSYHLDWDKMDDPNFIPFGGDTKSGCSEAQPPESPETRLGQPAAEQLHAGPATEEPGPCLSQQLHSASAEDTPVVQLAAETPTAESKERALNSASTSLPTSCPGSEPVPTHQQGQPALELKEESFRDPAEVLGTGAEVDYLEQFGTSSFKESALRKQSLYLKFDPLLRDSPGRPVPVATETSSMHGANETPSGRPREAKLVEFDFLGALDIPVPGPPPGVPAPGGPPLSTGPIVDLLQYSQKDLDAVVKATQEENRELRSRCEELHGKNLELGKIMDRFEEVVYQAMEEVQKQKELSKAEIQKVLKEKDQLTTDLNSMEKSFSDLFKRFEKQKEVIEGYRKNEESLKKCVEDYLARITQEGQRYQALKAHAEEKLQLANEEIAQVRSKAQAEALALQASLRKEQMRIQSLEKTVEQKTKENEELTRICDDLISKMEKI</sequence>
<proteinExistence type="evidence at protein level"/>
<accession>Q9Y6A5</accession>
<accession>Q2NKK4</accession>
<accession>Q3KQS5</accession>
<accession>Q9UMQ1</accession>
<comment type="function">
    <text evidence="2 7 10 11">Plays a role in the microtubule-dependent coupling of the nucleus and the centrosome. Involved in the processes that regulate centrosome-mediated interkinetic nuclear migration (INM) of neural progenitors (By similarity). Acts as a component of the TACC3/ch-TOG/clathrin complex proposed to contribute to stabilization of kinetochore fibers of the mitotic spindle by acting as inter-microtubule bridge. The TACC3/ch-TOG/clathrin complex is required for the maintenance of kinetochore fiber tension (PubMed:21297582, PubMed:23532825). May be involved in the control of cell growth and differentiation. May contribute to cancer (PubMed:14767476).</text>
</comment>
<comment type="subunit">
    <text evidence="2 7 10 12 13">Interacts with microtubules. Interacts with CKAP5 independently of clathrin. Interacts with CKAP5 and clathrin forming the TACC3/ch-TOG/clathrin complex located at spindle inter-microtubules bridges; TACC3 (phosphorylated at Ser-558 by AURKA) and CLTC are proposed to form a composite microtubule interaction surface (PubMed:21297582, PubMed:23918938, PubMed:25596274). Interacts with CCDC100/CEP120. The coiled coil C-terminal region interacts with AH receptor nuclear translocator protein (ARNT) and ARNT2 (By similarity). Interacts with GCN5L2 and PCAF (PubMed:14767476).</text>
</comment>
<comment type="interaction">
    <interactant intactId="EBI-2554984">
        <id>Q9Y6A5</id>
    </interactant>
    <interactant intactId="EBI-10295284">
        <id>Q99819</id>
        <label>ARHGDIG</label>
    </interactant>
    <organismsDiffer>false</organismsDiffer>
    <experiments>3</experiments>
</comment>
<comment type="interaction">
    <interactant intactId="EBI-2554984">
        <id>Q9Y6A5</id>
    </interactant>
    <interactant intactId="EBI-1993677">
        <id>Q9BZE9</id>
        <label>ASPSCR1</label>
    </interactant>
    <organismsDiffer>false</organismsDiffer>
    <experiments>3</experiments>
</comment>
<comment type="interaction">
    <interactant intactId="EBI-2554984">
        <id>Q9Y6A5</id>
    </interactant>
    <interactant intactId="EBI-745073">
        <id>Q9BXY8</id>
        <label>BEX2</label>
    </interactant>
    <organismsDiffer>false</organismsDiffer>
    <experiments>3</experiments>
</comment>
<comment type="interaction">
    <interactant intactId="EBI-2554984">
        <id>Q9Y6A5</id>
    </interactant>
    <interactant intactId="EBI-741753">
        <id>Q00994</id>
        <label>BEX3</label>
    </interactant>
    <organismsDiffer>false</organismsDiffer>
    <experiments>3</experiments>
</comment>
<comment type="interaction">
    <interactant intactId="EBI-2554984">
        <id>Q9Y6A5</id>
    </interactant>
    <interactant intactId="EBI-739879">
        <id>Q53TS8</id>
        <label>C2CD6</label>
    </interactant>
    <organismsDiffer>false</organismsDiffer>
    <experiments>3</experiments>
</comment>
<comment type="interaction">
    <interactant intactId="EBI-2554984">
        <id>Q9Y6A5</id>
    </interactant>
    <interactant intactId="EBI-10175300">
        <id>Q8TD31-3</id>
        <label>CCHCR1</label>
    </interactant>
    <organismsDiffer>false</organismsDiffer>
    <experiments>3</experiments>
</comment>
<comment type="interaction">
    <interactant intactId="EBI-2554984">
        <id>Q9Y6A5</id>
    </interactant>
    <interactant intactId="EBI-11983537">
        <id>Q86Y33-5</id>
        <label>CDC20B</label>
    </interactant>
    <organismsDiffer>false</organismsDiffer>
    <experiments>3</experiments>
</comment>
<comment type="interaction">
    <interactant intactId="EBI-2554984">
        <id>Q9Y6A5</id>
    </interactant>
    <interactant intactId="EBI-747776">
        <id>Q53EZ4</id>
        <label>CEP55</label>
    </interactant>
    <organismsDiffer>false</organismsDiffer>
    <experiments>3</experiments>
</comment>
<comment type="interaction">
    <interactant intactId="EBI-2554984">
        <id>Q9Y6A5</id>
    </interactant>
    <interactant intactId="EBI-10292696">
        <id>Q96Q77</id>
        <label>CIB3</label>
    </interactant>
    <organismsDiffer>false</organismsDiffer>
    <experiments>9</experiments>
</comment>
<comment type="interaction">
    <interactant intactId="EBI-2554984">
        <id>Q9Y6A5</id>
    </interactant>
    <interactant intactId="EBI-310585">
        <id>Q14008</id>
        <label>CKAP5</label>
    </interactant>
    <organismsDiffer>false</organismsDiffer>
    <experiments>10</experiments>
</comment>
<comment type="interaction">
    <interactant intactId="EBI-2554984">
        <id>Q9Y6A5</id>
    </interactant>
    <interactant intactId="EBI-1171169">
        <id>P09496</id>
        <label>CLTA</label>
    </interactant>
    <organismsDiffer>false</organismsDiffer>
    <experiments>3</experiments>
</comment>
<comment type="interaction">
    <interactant intactId="EBI-2554984">
        <id>Q9Y6A5</id>
    </interactant>
    <interactant intactId="EBI-297353">
        <id>P00533</id>
        <label>EGFR</label>
    </interactant>
    <organismsDiffer>false</organismsDiffer>
    <experiments>3</experiments>
</comment>
<comment type="interaction">
    <interactant intactId="EBI-2554984">
        <id>Q9Y6A5</id>
    </interactant>
    <interactant intactId="EBI-2116863">
        <id>Q99988</id>
        <label>GDF15</label>
    </interactant>
    <organismsDiffer>false</organismsDiffer>
    <experiments>3</experiments>
</comment>
<comment type="interaction">
    <interactant intactId="EBI-2554984">
        <id>Q9Y6A5</id>
    </interactant>
    <interactant intactId="EBI-23670573">
        <id>Q96DY2-2</id>
        <label>IQCD</label>
    </interactant>
    <organismsDiffer>false</organismsDiffer>
    <experiments>3</experiments>
</comment>
<comment type="interaction">
    <interactant intactId="EBI-2554984">
        <id>Q9Y6A5</id>
    </interactant>
    <interactant intactId="EBI-2554344">
        <id>Q2M2Z5</id>
        <label>KIZ</label>
    </interactant>
    <organismsDiffer>false</organismsDiffer>
    <experiments>6</experiments>
</comment>
<comment type="interaction">
    <interactant intactId="EBI-2554984">
        <id>Q9Y6A5</id>
    </interactant>
    <interactant intactId="EBI-11979975">
        <id>Q07866-2</id>
        <label>KLC1</label>
    </interactant>
    <organismsDiffer>false</organismsDiffer>
    <experiments>3</experiments>
</comment>
<comment type="interaction">
    <interactant intactId="EBI-2554984">
        <id>Q9Y6A5</id>
    </interactant>
    <interactant intactId="EBI-6426443">
        <id>Q2WGJ6</id>
        <label>KLHL38</label>
    </interactant>
    <organismsDiffer>false</organismsDiffer>
    <experiments>4</experiments>
</comment>
<comment type="interaction">
    <interactant intactId="EBI-2554984">
        <id>Q9Y6A5</id>
    </interactant>
    <interactant intactId="EBI-928842">
        <id>Q9GZM8</id>
        <label>NDEL1</label>
    </interactant>
    <organismsDiffer>false</organismsDiffer>
    <experiments>3</experiments>
</comment>
<comment type="interaction">
    <interactant intactId="EBI-2554984">
        <id>Q9Y6A5</id>
    </interactant>
    <interactant intactId="EBI-741048">
        <id>Q7Z3B4</id>
        <label>NUP54</label>
    </interactant>
    <organismsDiffer>false</organismsDiffer>
    <experiments>3</experiments>
</comment>
<comment type="interaction">
    <interactant intactId="EBI-2554984">
        <id>Q9Y6A5</id>
    </interactant>
    <interactant intactId="EBI-2372238">
        <id>Q5VTR2</id>
        <label>RNF20</label>
    </interactant>
    <organismsDiffer>false</organismsDiffer>
    <experiments>3</experiments>
</comment>
<comment type="interaction">
    <interactant intactId="EBI-2554984">
        <id>Q9Y6A5</id>
    </interactant>
    <interactant intactId="EBI-744896">
        <id>Q7Z614</id>
        <label>SNX20</label>
    </interactant>
    <organismsDiffer>false</organismsDiffer>
    <experiments>3</experiments>
</comment>
<comment type="interaction">
    <interactant intactId="EBI-2554984">
        <id>Q9Y6A5</id>
    </interactant>
    <interactant intactId="EBI-11334239">
        <id>Q8TC71</id>
        <label>SPATA18</label>
    </interactant>
    <organismsDiffer>false</organismsDiffer>
    <experiments>3</experiments>
</comment>
<comment type="interaction">
    <interactant intactId="EBI-2554984">
        <id>Q9Y6A5</id>
    </interactant>
    <interactant intactId="EBI-8787464">
        <id>Q9NU19</id>
        <label>TBC1D22B</label>
    </interactant>
    <organismsDiffer>false</organismsDiffer>
    <experiments>7</experiments>
</comment>
<comment type="interaction">
    <interactant intactId="EBI-2554984">
        <id>Q9Y6A5</id>
    </interactant>
    <interactant intactId="EBI-2559305">
        <id>A5D8V6</id>
        <label>VPS37C</label>
    </interactant>
    <organismsDiffer>false</organismsDiffer>
    <experiments>3</experiments>
</comment>
<comment type="subcellular location">
    <subcellularLocation>
        <location evidence="1">Cytoplasm</location>
    </subcellularLocation>
    <subcellularLocation>
        <location evidence="9">Cytoplasm</location>
        <location evidence="9">Cytoskeleton</location>
        <location evidence="9">Microtubule organizing center</location>
        <location evidence="9">Centrosome</location>
    </subcellularLocation>
    <subcellularLocation>
        <location evidence="9 10 12">Cytoplasm</location>
        <location evidence="9 10 12">Cytoskeleton</location>
        <location evidence="9 10 12">Spindle</location>
    </subcellularLocation>
    <subcellularLocation>
        <location evidence="3">Cytoplasm</location>
        <location evidence="3">Cytoskeleton</location>
        <location evidence="3">Spindle pole</location>
    </subcellularLocation>
    <text evidence="13">In complex with CKAP5 localized to microtubule plus-ends in mitosis and interphase. In complex with CKAP5 and clathrin localized to inter-microtubule bridges in mitotic spindles.</text>
</comment>
<comment type="induction">
    <text>Up-regulated in various cancer cell lines.</text>
</comment>
<comment type="similarity">
    <text evidence="14">Belongs to the TACC family.</text>
</comment>
<comment type="online information" name="Atlas of Genetics and Cytogenetics in Oncology and Haematology">
    <link uri="https://atlasgeneticsoncology.org/gene/42458/TACC3"/>
</comment>
<feature type="initiator methionine" description="Removed" evidence="18">
    <location>
        <position position="1"/>
    </location>
</feature>
<feature type="chain" id="PRO_0000179990" description="Transforming acidic coiled-coil-containing protein 3">
    <location>
        <begin position="2"/>
        <end position="838"/>
    </location>
</feature>
<feature type="region of interest" description="Disordered" evidence="5">
    <location>
        <begin position="123"/>
        <end position="227"/>
    </location>
</feature>
<feature type="region of interest" description="Disordered" evidence="5">
    <location>
        <begin position="311"/>
        <end position="527"/>
    </location>
</feature>
<feature type="region of interest" description="Necessary but not sufficient for spindle localization" evidence="12">
    <location>
        <begin position="522"/>
        <end position="577"/>
    </location>
</feature>
<feature type="region of interest" description="Disordered" evidence="5">
    <location>
        <begin position="569"/>
        <end position="594"/>
    </location>
</feature>
<feature type="region of interest" description="Necessary but not sufficient for spindle localization" evidence="12">
    <location>
        <begin position="594"/>
        <end position="838"/>
    </location>
</feature>
<feature type="coiled-coil region" evidence="4">
    <location>
        <begin position="637"/>
        <end position="837"/>
    </location>
</feature>
<feature type="compositionally biased region" description="Low complexity" evidence="5">
    <location>
        <begin position="132"/>
        <end position="164"/>
    </location>
</feature>
<feature type="compositionally biased region" description="Basic and acidic residues" evidence="5">
    <location>
        <begin position="204"/>
        <end position="227"/>
    </location>
</feature>
<feature type="compositionally biased region" description="Basic and acidic residues" evidence="5">
    <location>
        <begin position="403"/>
        <end position="412"/>
    </location>
</feature>
<feature type="compositionally biased region" description="Polar residues" evidence="5">
    <location>
        <begin position="492"/>
        <end position="503"/>
    </location>
</feature>
<feature type="compositionally biased region" description="Polar residues" evidence="5">
    <location>
        <begin position="579"/>
        <end position="591"/>
    </location>
</feature>
<feature type="modified residue" description="N-acetylserine" evidence="18">
    <location>
        <position position="2"/>
    </location>
</feature>
<feature type="modified residue" description="Phosphoserine" evidence="15 16 17 20 22">
    <location>
        <position position="25"/>
    </location>
</feature>
<feature type="modified residue" description="Phosphoserine" evidence="21 22">
    <location>
        <position position="39"/>
    </location>
</feature>
<feature type="modified residue" description="Phosphoserine" evidence="17 20 22">
    <location>
        <position position="71"/>
    </location>
</feature>
<feature type="modified residue" description="Phosphoserine" evidence="19">
    <location>
        <position position="175"/>
    </location>
</feature>
<feature type="modified residue" description="Phosphoserine" evidence="22">
    <location>
        <position position="177"/>
    </location>
</feature>
<feature type="modified residue" description="Phosphoserine" evidence="22">
    <location>
        <position position="250"/>
    </location>
</feature>
<feature type="modified residue" description="Phosphoserine" evidence="17 20 22">
    <location>
        <position position="317"/>
    </location>
</feature>
<feature type="modified residue" description="Phosphoserine" evidence="20">
    <location>
        <position position="402"/>
    </location>
</feature>
<feature type="modified residue" description="Phosphoserine" evidence="15 17 22">
    <location>
        <position position="434"/>
    </location>
</feature>
<feature type="modified residue" description="Phosphoserine; by AURKA" evidence="9 17 22">
    <location>
        <position position="558"/>
    </location>
</feature>
<feature type="sequence variant" id="VAR_053714" description="In dbSNP:rs34205238.">
    <original>E</original>
    <variation>K</variation>
    <location>
        <position position="143"/>
    </location>
</feature>
<feature type="sequence variant" id="VAR_053715" description="In dbSNP:rs17132047." evidence="6 8">
    <original>C</original>
    <variation>Y</variation>
    <location>
        <position position="275"/>
    </location>
</feature>
<feature type="sequence variant" id="VAR_053716" description="In dbSNP:rs1063743." evidence="6 8">
    <original>G</original>
    <variation>S</variation>
    <location>
        <position position="287"/>
    </location>
</feature>
<feature type="sequence variant" id="VAR_053717" description="In dbSNP:rs17680881." evidence="6 8">
    <original>G</original>
    <variation>E</variation>
    <location>
        <position position="514"/>
    </location>
</feature>
<feature type="mutagenesis site" description="Disrupts localization to mitotic spindle and impairs recruitment of clathrin to mitotic spindle." evidence="10">
    <original>S</original>
    <variation>A</variation>
    <location>
        <position position="558"/>
    </location>
</feature>
<feature type="mutagenesis site" description="Impairs localization to mitotic spindle." evidence="12">
    <original>LL</original>
    <variation>AA</variation>
    <location>
        <begin position="566"/>
        <end position="567"/>
    </location>
</feature>
<feature type="sequence conflict" description="In Ref. 2; CAB53009." evidence="14" ref="2">
    <original>V</original>
    <variation>L</variation>
    <location>
        <position position="342"/>
    </location>
</feature>
<feature type="sequence conflict" description="In Ref. 2; CAB53009." evidence="14" ref="2">
    <original>D</original>
    <variation>G</variation>
    <location>
        <position position="406"/>
    </location>
</feature>
<feature type="helix" evidence="24">
    <location>
        <begin position="528"/>
        <end position="530"/>
    </location>
</feature>
<feature type="turn" evidence="24">
    <location>
        <begin position="531"/>
        <end position="541"/>
    </location>
</feature>
<feature type="helix" evidence="24">
    <location>
        <begin position="546"/>
        <end position="555"/>
    </location>
</feature>
<feature type="helix" evidence="23">
    <location>
        <begin position="759"/>
        <end position="835"/>
    </location>
</feature>
<name>TACC3_HUMAN</name>
<evidence type="ECO:0000250" key="1"/>
<evidence type="ECO:0000250" key="2">
    <source>
        <dbReference type="UniProtKB" id="Q9JJ11"/>
    </source>
</evidence>
<evidence type="ECO:0000250" key="3">
    <source>
        <dbReference type="UniProtKB" id="Q9PTG8"/>
    </source>
</evidence>
<evidence type="ECO:0000255" key="4"/>
<evidence type="ECO:0000256" key="5">
    <source>
        <dbReference type="SAM" id="MobiDB-lite"/>
    </source>
</evidence>
<evidence type="ECO:0000269" key="6">
    <source>
    </source>
</evidence>
<evidence type="ECO:0000269" key="7">
    <source>
    </source>
</evidence>
<evidence type="ECO:0000269" key="8">
    <source>
    </source>
</evidence>
<evidence type="ECO:0000269" key="9">
    <source>
    </source>
</evidence>
<evidence type="ECO:0000269" key="10">
    <source>
    </source>
</evidence>
<evidence type="ECO:0000269" key="11">
    <source>
    </source>
</evidence>
<evidence type="ECO:0000269" key="12">
    <source>
    </source>
</evidence>
<evidence type="ECO:0000269" key="13">
    <source>
    </source>
</evidence>
<evidence type="ECO:0000305" key="14"/>
<evidence type="ECO:0007744" key="15">
    <source>
    </source>
</evidence>
<evidence type="ECO:0007744" key="16">
    <source>
    </source>
</evidence>
<evidence type="ECO:0007744" key="17">
    <source>
    </source>
</evidence>
<evidence type="ECO:0007744" key="18">
    <source>
    </source>
</evidence>
<evidence type="ECO:0007744" key="19">
    <source>
    </source>
</evidence>
<evidence type="ECO:0007744" key="20">
    <source>
    </source>
</evidence>
<evidence type="ECO:0007744" key="21">
    <source>
    </source>
</evidence>
<evidence type="ECO:0007744" key="22">
    <source>
    </source>
</evidence>
<evidence type="ECO:0007829" key="23">
    <source>
        <dbReference type="PDB" id="5LXN"/>
    </source>
</evidence>
<evidence type="ECO:0007829" key="24">
    <source>
        <dbReference type="PDB" id="5ODT"/>
    </source>
</evidence>
<gene>
    <name type="primary">TACC3</name>
    <name type="synonym">ERIC1</name>
</gene>
<protein>
    <recommendedName>
        <fullName>Transforming acidic coiled-coil-containing protein 3</fullName>
    </recommendedName>
    <alternativeName>
        <fullName>ERIC-1</fullName>
    </alternativeName>
</protein>
<organism>
    <name type="scientific">Homo sapiens</name>
    <name type="common">Human</name>
    <dbReference type="NCBI Taxonomy" id="9606"/>
    <lineage>
        <taxon>Eukaryota</taxon>
        <taxon>Metazoa</taxon>
        <taxon>Chordata</taxon>
        <taxon>Craniata</taxon>
        <taxon>Vertebrata</taxon>
        <taxon>Euteleostomi</taxon>
        <taxon>Mammalia</taxon>
        <taxon>Eutheria</taxon>
        <taxon>Euarchontoglires</taxon>
        <taxon>Primates</taxon>
        <taxon>Haplorrhini</taxon>
        <taxon>Catarrhini</taxon>
        <taxon>Hominidae</taxon>
        <taxon>Homo</taxon>
    </lineage>
</organism>